<proteinExistence type="evidence at transcript level"/>
<reference key="1">
    <citation type="journal article" date="2005" name="BMC Genomics">
        <title>Characterization of 954 bovine full-CDS cDNA sequences.</title>
        <authorList>
            <person name="Harhay G.P."/>
            <person name="Sonstegard T.S."/>
            <person name="Keele J.W."/>
            <person name="Heaton M.P."/>
            <person name="Clawson M.L."/>
            <person name="Snelling W.M."/>
            <person name="Wiedmann R.T."/>
            <person name="Van Tassell C.P."/>
            <person name="Smith T.P.L."/>
        </authorList>
    </citation>
    <scope>NUCLEOTIDE SEQUENCE [LARGE SCALE MRNA]</scope>
</reference>
<name>LIAS_BOVIN</name>
<dbReference type="EC" id="2.8.1.8" evidence="1"/>
<dbReference type="EMBL" id="BT021177">
    <property type="protein sequence ID" value="AAX31359.1"/>
    <property type="molecule type" value="mRNA"/>
</dbReference>
<dbReference type="RefSeq" id="NP_001017944.1">
    <property type="nucleotide sequence ID" value="NM_001017944.1"/>
</dbReference>
<dbReference type="SMR" id="Q5BIP7"/>
<dbReference type="FunCoup" id="Q5BIP7">
    <property type="interactions" value="2920"/>
</dbReference>
<dbReference type="STRING" id="9913.ENSBTAP00000019299"/>
<dbReference type="PaxDb" id="9913-ENSBTAP00000019299"/>
<dbReference type="Ensembl" id="ENSBTAT00000019299.5">
    <property type="protein sequence ID" value="ENSBTAP00000019299.4"/>
    <property type="gene ID" value="ENSBTAG00000014520.6"/>
</dbReference>
<dbReference type="GeneID" id="530865"/>
<dbReference type="KEGG" id="bta:530865"/>
<dbReference type="CTD" id="11019"/>
<dbReference type="VEuPathDB" id="HostDB:ENSBTAG00000014520"/>
<dbReference type="VGNC" id="VGNC:30879">
    <property type="gene designation" value="LIAS"/>
</dbReference>
<dbReference type="eggNOG" id="KOG2672">
    <property type="taxonomic scope" value="Eukaryota"/>
</dbReference>
<dbReference type="GeneTree" id="ENSGT00390000006234"/>
<dbReference type="HOGENOM" id="CLU_033144_1_2_1"/>
<dbReference type="InParanoid" id="Q5BIP7"/>
<dbReference type="OMA" id="PYCDIDF"/>
<dbReference type="OrthoDB" id="3231at2759"/>
<dbReference type="TreeFam" id="TF300817"/>
<dbReference type="Reactome" id="R-BTA-9857492">
    <property type="pathway name" value="Protein lipoylation"/>
</dbReference>
<dbReference type="UniPathway" id="UPA00538">
    <property type="reaction ID" value="UER00593"/>
</dbReference>
<dbReference type="Proteomes" id="UP000009136">
    <property type="component" value="Chromosome 6"/>
</dbReference>
<dbReference type="Bgee" id="ENSBTAG00000014520">
    <property type="expression patterns" value="Expressed in oocyte and 104 other cell types or tissues"/>
</dbReference>
<dbReference type="GO" id="GO:0005739">
    <property type="term" value="C:mitochondrion"/>
    <property type="evidence" value="ECO:0000318"/>
    <property type="project" value="GO_Central"/>
</dbReference>
<dbReference type="GO" id="GO:0051539">
    <property type="term" value="F:4 iron, 4 sulfur cluster binding"/>
    <property type="evidence" value="ECO:0007669"/>
    <property type="project" value="UniProtKB-UniRule"/>
</dbReference>
<dbReference type="GO" id="GO:0016992">
    <property type="term" value="F:lipoate synthase activity"/>
    <property type="evidence" value="ECO:0000318"/>
    <property type="project" value="GO_Central"/>
</dbReference>
<dbReference type="GO" id="GO:0046872">
    <property type="term" value="F:metal ion binding"/>
    <property type="evidence" value="ECO:0007669"/>
    <property type="project" value="UniProtKB-KW"/>
</dbReference>
<dbReference type="GO" id="GO:0009107">
    <property type="term" value="P:lipoate biosynthetic process"/>
    <property type="evidence" value="ECO:0000318"/>
    <property type="project" value="GO_Central"/>
</dbReference>
<dbReference type="CDD" id="cd01335">
    <property type="entry name" value="Radical_SAM"/>
    <property type="match status" value="1"/>
</dbReference>
<dbReference type="FunFam" id="3.20.20.70:FF:000036">
    <property type="entry name" value="Lipoyl synthase, mitochondrial"/>
    <property type="match status" value="1"/>
</dbReference>
<dbReference type="Gene3D" id="3.20.20.70">
    <property type="entry name" value="Aldolase class I"/>
    <property type="match status" value="1"/>
</dbReference>
<dbReference type="HAMAP" id="MF_00206">
    <property type="entry name" value="Lipoyl_synth"/>
    <property type="match status" value="1"/>
</dbReference>
<dbReference type="InterPro" id="IPR013785">
    <property type="entry name" value="Aldolase_TIM"/>
</dbReference>
<dbReference type="InterPro" id="IPR006638">
    <property type="entry name" value="Elp3/MiaA/NifB-like_rSAM"/>
</dbReference>
<dbReference type="InterPro" id="IPR031691">
    <property type="entry name" value="LIAS_N"/>
</dbReference>
<dbReference type="InterPro" id="IPR003698">
    <property type="entry name" value="Lipoyl_synth"/>
</dbReference>
<dbReference type="InterPro" id="IPR007197">
    <property type="entry name" value="rSAM"/>
</dbReference>
<dbReference type="NCBIfam" id="TIGR00510">
    <property type="entry name" value="lipA"/>
    <property type="match status" value="1"/>
</dbReference>
<dbReference type="NCBIfam" id="NF004019">
    <property type="entry name" value="PRK05481.1"/>
    <property type="match status" value="1"/>
</dbReference>
<dbReference type="NCBIfam" id="NF009544">
    <property type="entry name" value="PRK12928.1"/>
    <property type="match status" value="1"/>
</dbReference>
<dbReference type="PANTHER" id="PTHR10949">
    <property type="entry name" value="LIPOYL SYNTHASE"/>
    <property type="match status" value="1"/>
</dbReference>
<dbReference type="PANTHER" id="PTHR10949:SF0">
    <property type="entry name" value="LIPOYL SYNTHASE, MITOCHONDRIAL"/>
    <property type="match status" value="1"/>
</dbReference>
<dbReference type="Pfam" id="PF16881">
    <property type="entry name" value="LIAS_N"/>
    <property type="match status" value="1"/>
</dbReference>
<dbReference type="Pfam" id="PF04055">
    <property type="entry name" value="Radical_SAM"/>
    <property type="match status" value="1"/>
</dbReference>
<dbReference type="PIRSF" id="PIRSF005963">
    <property type="entry name" value="Lipoyl_synth"/>
    <property type="match status" value="1"/>
</dbReference>
<dbReference type="SFLD" id="SFLDF00271">
    <property type="entry name" value="lipoyl_synthase"/>
    <property type="match status" value="1"/>
</dbReference>
<dbReference type="SFLD" id="SFLDS00029">
    <property type="entry name" value="Radical_SAM"/>
    <property type="match status" value="1"/>
</dbReference>
<dbReference type="SMART" id="SM00729">
    <property type="entry name" value="Elp3"/>
    <property type="match status" value="1"/>
</dbReference>
<dbReference type="SUPFAM" id="SSF102114">
    <property type="entry name" value="Radical SAM enzymes"/>
    <property type="match status" value="1"/>
</dbReference>
<dbReference type="PROSITE" id="PS51918">
    <property type="entry name" value="RADICAL_SAM"/>
    <property type="match status" value="1"/>
</dbReference>
<keyword id="KW-0004">4Fe-4S</keyword>
<keyword id="KW-0408">Iron</keyword>
<keyword id="KW-0411">Iron-sulfur</keyword>
<keyword id="KW-0479">Metal-binding</keyword>
<keyword id="KW-0496">Mitochondrion</keyword>
<keyword id="KW-1185">Reference proteome</keyword>
<keyword id="KW-0949">S-adenosyl-L-methionine</keyword>
<keyword id="KW-0808">Transferase</keyword>
<keyword id="KW-0809">Transit peptide</keyword>
<protein>
    <recommendedName>
        <fullName evidence="1">Lipoyl synthase, mitochondrial</fullName>
        <ecNumber evidence="1">2.8.1.8</ecNumber>
    </recommendedName>
    <alternativeName>
        <fullName evidence="1">Lipoate synthase</fullName>
        <shortName evidence="1">LS</shortName>
        <shortName evidence="1">Lip-syn</shortName>
    </alternativeName>
    <alternativeName>
        <fullName evidence="1">Lipoic acid synthase</fullName>
    </alternativeName>
</protein>
<evidence type="ECO:0000255" key="1">
    <source>
        <dbReference type="HAMAP-Rule" id="MF_03123"/>
    </source>
</evidence>
<evidence type="ECO:0000255" key="2">
    <source>
        <dbReference type="PROSITE-ProRule" id="PRU01266"/>
    </source>
</evidence>
<gene>
    <name evidence="1" type="primary">LIAS</name>
</gene>
<organism>
    <name type="scientific">Bos taurus</name>
    <name type="common">Bovine</name>
    <dbReference type="NCBI Taxonomy" id="9913"/>
    <lineage>
        <taxon>Eukaryota</taxon>
        <taxon>Metazoa</taxon>
        <taxon>Chordata</taxon>
        <taxon>Craniata</taxon>
        <taxon>Vertebrata</taxon>
        <taxon>Euteleostomi</taxon>
        <taxon>Mammalia</taxon>
        <taxon>Eutheria</taxon>
        <taxon>Laurasiatheria</taxon>
        <taxon>Artiodactyla</taxon>
        <taxon>Ruminantia</taxon>
        <taxon>Pecora</taxon>
        <taxon>Bovidae</taxon>
        <taxon>Bovinae</taxon>
        <taxon>Bos</taxon>
    </lineage>
</organism>
<accession>Q5BIP7</accession>
<comment type="function">
    <text evidence="1">Catalyzes the radical-mediated insertion of two sulfur atoms into the C-6 and C-8 positions of the octanoyl moiety bound to the lipoyl domains of lipoate-dependent enzymes, thereby converting the octanoylated domains into lipoylated derivatives.</text>
</comment>
<comment type="catalytic activity">
    <reaction evidence="1">
        <text>[[Fe-S] cluster scaffold protein carrying a second [4Fe-4S](2+) cluster] + N(6)-octanoyl-L-lysyl-[protein] + 2 oxidized [2Fe-2S]-[ferredoxin] + 2 S-adenosyl-L-methionine + 4 H(+) = [[Fe-S] cluster scaffold protein] + N(6)-[(R)-dihydrolipoyl]-L-lysyl-[protein] + 4 Fe(3+) + 2 hydrogen sulfide + 2 5'-deoxyadenosine + 2 L-methionine + 2 reduced [2Fe-2S]-[ferredoxin]</text>
        <dbReference type="Rhea" id="RHEA:16585"/>
        <dbReference type="Rhea" id="RHEA-COMP:9928"/>
        <dbReference type="Rhea" id="RHEA-COMP:10000"/>
        <dbReference type="Rhea" id="RHEA-COMP:10001"/>
        <dbReference type="Rhea" id="RHEA-COMP:10475"/>
        <dbReference type="Rhea" id="RHEA-COMP:14568"/>
        <dbReference type="Rhea" id="RHEA-COMP:14569"/>
        <dbReference type="ChEBI" id="CHEBI:15378"/>
        <dbReference type="ChEBI" id="CHEBI:17319"/>
        <dbReference type="ChEBI" id="CHEBI:29034"/>
        <dbReference type="ChEBI" id="CHEBI:29919"/>
        <dbReference type="ChEBI" id="CHEBI:33722"/>
        <dbReference type="ChEBI" id="CHEBI:33737"/>
        <dbReference type="ChEBI" id="CHEBI:33738"/>
        <dbReference type="ChEBI" id="CHEBI:57844"/>
        <dbReference type="ChEBI" id="CHEBI:59789"/>
        <dbReference type="ChEBI" id="CHEBI:78809"/>
        <dbReference type="ChEBI" id="CHEBI:83100"/>
        <dbReference type="EC" id="2.8.1.8"/>
    </reaction>
</comment>
<comment type="cofactor">
    <cofactor evidence="1">
        <name>[4Fe-4S] cluster</name>
        <dbReference type="ChEBI" id="CHEBI:49883"/>
    </cofactor>
    <text evidence="1">Binds 2 [4Fe-4S] clusters per subunit. One cluster is coordinated with 3 cysteines and an exchangeable S-adenosyl-L-methionine.</text>
</comment>
<comment type="pathway">
    <text evidence="1">Protein modification; protein lipoylation via endogenous pathway; protein N(6)-(lipoyl)lysine from octanoyl-[acyl-carrier-protein]: step 2/2.</text>
</comment>
<comment type="subcellular location">
    <subcellularLocation>
        <location evidence="1">Mitochondrion</location>
    </subcellularLocation>
</comment>
<comment type="similarity">
    <text evidence="1">Belongs to the radical SAM superfamily. Lipoyl synthase family.</text>
</comment>
<feature type="transit peptide" description="Mitochondrion" evidence="1">
    <location>
        <begin position="1"/>
        <end position="27"/>
    </location>
</feature>
<feature type="chain" id="PRO_0000332310" description="Lipoyl synthase, mitochondrial">
    <location>
        <begin position="28"/>
        <end position="372"/>
    </location>
</feature>
<feature type="domain" description="Radical SAM core" evidence="2">
    <location>
        <begin position="122"/>
        <end position="341"/>
    </location>
</feature>
<feature type="binding site" evidence="1">
    <location>
        <position position="106"/>
    </location>
    <ligand>
        <name>[4Fe-4S] cluster</name>
        <dbReference type="ChEBI" id="CHEBI:49883"/>
        <label>1</label>
    </ligand>
</feature>
<feature type="binding site" evidence="1">
    <location>
        <position position="111"/>
    </location>
    <ligand>
        <name>[4Fe-4S] cluster</name>
        <dbReference type="ChEBI" id="CHEBI:49883"/>
        <label>1</label>
    </ligand>
</feature>
<feature type="binding site" evidence="1">
    <location>
        <position position="117"/>
    </location>
    <ligand>
        <name>[4Fe-4S] cluster</name>
        <dbReference type="ChEBI" id="CHEBI:49883"/>
        <label>1</label>
    </ligand>
</feature>
<feature type="binding site" evidence="1">
    <location>
        <position position="137"/>
    </location>
    <ligand>
        <name>[4Fe-4S] cluster</name>
        <dbReference type="ChEBI" id="CHEBI:49883"/>
        <label>2</label>
        <note>4Fe-4S-S-AdoMet</note>
    </ligand>
</feature>
<feature type="binding site" evidence="1">
    <location>
        <position position="141"/>
    </location>
    <ligand>
        <name>[4Fe-4S] cluster</name>
        <dbReference type="ChEBI" id="CHEBI:49883"/>
        <label>2</label>
        <note>4Fe-4S-S-AdoMet</note>
    </ligand>
</feature>
<feature type="binding site" evidence="1">
    <location>
        <position position="144"/>
    </location>
    <ligand>
        <name>[4Fe-4S] cluster</name>
        <dbReference type="ChEBI" id="CHEBI:49883"/>
        <label>2</label>
        <note>4Fe-4S-S-AdoMet</note>
    </ligand>
</feature>
<feature type="binding site" evidence="1">
    <location>
        <position position="352"/>
    </location>
    <ligand>
        <name>[4Fe-4S] cluster</name>
        <dbReference type="ChEBI" id="CHEBI:49883"/>
        <label>1</label>
    </ligand>
</feature>
<sequence length="372" mass="42035">MSLRCGGAVRTVGPRVFGRYVFSPVREVSFLPDEKKEFLQSGPDLQEFISGNLADKSTWDEYKGNLKRQKGERLRLPPWLKTEIPMGKNYNKLKNTLRNLNLHTVCEEARCPNIGECWGGGEYATATATIMLMGDTCTRGCRFCSVKTARNPPPLDANEPYNTAKAIAEWGLDYVVLTSVDRDDMPDGGAEHFAKTVSYLKERNPKILVECLTPDFRGDLKAIEKVALSGLDVYAHNVETVPELQRKVRDPRANFDQSLRVLKHAKEVRPDVISKTSIMLGLGENDEQVYATMKALREADVDCLTLGQYMQPTKRHLKVEEYITPEKFKYWEKVGNELGFHYTASGPLVRSSYKAGEFFLKNLVAKRKTKAL</sequence>